<gene>
    <name type="ordered locus">At2g43440</name>
    <name type="ORF">T1O24.18</name>
</gene>
<comment type="sequence caution" evidence="1">
    <conflict type="erroneous gene model prediction">
        <sequence resource="EMBL-CDS" id="AAB64340"/>
    </conflict>
    <text>The predicted gene At2g43440 has been split into 2 genes: At2g43440 and At2g43445.</text>
</comment>
<organism>
    <name type="scientific">Arabidopsis thaliana</name>
    <name type="common">Mouse-ear cress</name>
    <dbReference type="NCBI Taxonomy" id="3702"/>
    <lineage>
        <taxon>Eukaryota</taxon>
        <taxon>Viridiplantae</taxon>
        <taxon>Streptophyta</taxon>
        <taxon>Embryophyta</taxon>
        <taxon>Tracheophyta</taxon>
        <taxon>Spermatophyta</taxon>
        <taxon>Magnoliopsida</taxon>
        <taxon>eudicotyledons</taxon>
        <taxon>Gunneridae</taxon>
        <taxon>Pentapetalae</taxon>
        <taxon>rosids</taxon>
        <taxon>malvids</taxon>
        <taxon>Brassicales</taxon>
        <taxon>Brassicaceae</taxon>
        <taxon>Camelineae</taxon>
        <taxon>Arabidopsis</taxon>
    </lineage>
</organism>
<accession>A8MS20</accession>
<keyword id="KW-1185">Reference proteome</keyword>
<protein>
    <recommendedName>
        <fullName>F-box protein At2g43440</fullName>
    </recommendedName>
</protein>
<feature type="chain" id="PRO_0000396066" description="F-box protein At2g43440">
    <location>
        <begin position="1"/>
        <end position="401"/>
    </location>
</feature>
<feature type="domain" description="F-box">
    <location>
        <begin position="7"/>
        <end position="53"/>
    </location>
</feature>
<name>FB350_ARATH</name>
<evidence type="ECO:0000305" key="1"/>
<dbReference type="EMBL" id="AC002335">
    <property type="protein sequence ID" value="AAB64340.1"/>
    <property type="status" value="ALT_SEQ"/>
    <property type="molecule type" value="Genomic_DNA"/>
</dbReference>
<dbReference type="EMBL" id="CP002685">
    <property type="protein sequence ID" value="AEC10269.1"/>
    <property type="molecule type" value="Genomic_DNA"/>
</dbReference>
<dbReference type="EMBL" id="AY500328">
    <property type="status" value="NOT_ANNOTATED_CDS"/>
    <property type="molecule type" value="mRNA"/>
</dbReference>
<dbReference type="RefSeq" id="NP_181872.3">
    <property type="nucleotide sequence ID" value="NM_129905.4"/>
</dbReference>
<dbReference type="SMR" id="A8MS20"/>
<dbReference type="FunCoup" id="A8MS20">
    <property type="interactions" value="1"/>
</dbReference>
<dbReference type="STRING" id="3702.A8MS20"/>
<dbReference type="PaxDb" id="3702-AT2G43440.1"/>
<dbReference type="EnsemblPlants" id="AT2G43440.1">
    <property type="protein sequence ID" value="AT2G43440.1"/>
    <property type="gene ID" value="AT2G43440"/>
</dbReference>
<dbReference type="GeneID" id="818945"/>
<dbReference type="Gramene" id="AT2G43440.1">
    <property type="protein sequence ID" value="AT2G43440.1"/>
    <property type="gene ID" value="AT2G43440"/>
</dbReference>
<dbReference type="KEGG" id="ath:AT2G43440"/>
<dbReference type="Araport" id="AT2G43440"/>
<dbReference type="TAIR" id="AT2G43440"/>
<dbReference type="HOGENOM" id="CLU_027176_4_1_1"/>
<dbReference type="InParanoid" id="A8MS20"/>
<dbReference type="OMA" id="LHEESYH"/>
<dbReference type="PhylomeDB" id="A8MS20"/>
<dbReference type="PRO" id="PR:A8MS20"/>
<dbReference type="Proteomes" id="UP000006548">
    <property type="component" value="Chromosome 2"/>
</dbReference>
<dbReference type="ExpressionAtlas" id="A8MS20">
    <property type="expression patterns" value="baseline and differential"/>
</dbReference>
<dbReference type="CDD" id="cd22157">
    <property type="entry name" value="F-box_AtFBW1-like"/>
    <property type="match status" value="1"/>
</dbReference>
<dbReference type="Gene3D" id="1.20.1280.50">
    <property type="match status" value="1"/>
</dbReference>
<dbReference type="InterPro" id="IPR006527">
    <property type="entry name" value="F-box-assoc_dom_typ1"/>
</dbReference>
<dbReference type="InterPro" id="IPR017451">
    <property type="entry name" value="F-box-assoc_interact_dom"/>
</dbReference>
<dbReference type="InterPro" id="IPR036047">
    <property type="entry name" value="F-box-like_dom_sf"/>
</dbReference>
<dbReference type="InterPro" id="IPR001810">
    <property type="entry name" value="F-box_dom"/>
</dbReference>
<dbReference type="InterPro" id="IPR050796">
    <property type="entry name" value="SCF_F-box_component"/>
</dbReference>
<dbReference type="NCBIfam" id="TIGR01640">
    <property type="entry name" value="F_box_assoc_1"/>
    <property type="match status" value="1"/>
</dbReference>
<dbReference type="PANTHER" id="PTHR31672">
    <property type="entry name" value="BNACNNG10540D PROTEIN"/>
    <property type="match status" value="1"/>
</dbReference>
<dbReference type="PANTHER" id="PTHR31672:SF13">
    <property type="entry name" value="F-BOX PROTEIN CPR30-LIKE"/>
    <property type="match status" value="1"/>
</dbReference>
<dbReference type="Pfam" id="PF00646">
    <property type="entry name" value="F-box"/>
    <property type="match status" value="1"/>
</dbReference>
<dbReference type="Pfam" id="PF07734">
    <property type="entry name" value="FBA_1"/>
    <property type="match status" value="1"/>
</dbReference>
<dbReference type="SMART" id="SM00256">
    <property type="entry name" value="FBOX"/>
    <property type="match status" value="1"/>
</dbReference>
<dbReference type="SUPFAM" id="SSF81383">
    <property type="entry name" value="F-box domain"/>
    <property type="match status" value="1"/>
</dbReference>
<proteinExistence type="evidence at transcript level"/>
<sequence>MEEKRENTNSIYIVPELLEDIFLRLPLKSILKFKTVSRQWRSILESKLFVERRGNLQKHHRKILAAYNCNYFMRPSIFPESRFEGDEEIVYLHCDAAQPSMTCDGLLCITEPGWFNVLNPSAGQLRRFPPGPGPVKGPQENWLLGFGRDNVTGRYKIVRMCFHDCYEFGILDIETGVWSKLRSPPHNMLPGSKSVCVNGSIYWLQISAGYIILAMDLHEESYHGVHHLPATWVTQETQLVNLEDRLAMAMTTNVGPEWILEIWSMDIEGKGWSKGYSWSKSYSISLAHGVGFSWPWQKRWFTPVWVSKQGNLLFYDNHKRLFKYYSGTDEIRCLSSNICVISSYVENLAPLPLKPSHTHHDLGNSNSKFSTSRCHLFPTRGSWISKVLFTSILFGYICLPL</sequence>
<reference key="1">
    <citation type="journal article" date="1999" name="Nature">
        <title>Sequence and analysis of chromosome 2 of the plant Arabidopsis thaliana.</title>
        <authorList>
            <person name="Lin X."/>
            <person name="Kaul S."/>
            <person name="Rounsley S.D."/>
            <person name="Shea T.P."/>
            <person name="Benito M.-I."/>
            <person name="Town C.D."/>
            <person name="Fujii C.Y."/>
            <person name="Mason T.M."/>
            <person name="Bowman C.L."/>
            <person name="Barnstead M.E."/>
            <person name="Feldblyum T.V."/>
            <person name="Buell C.R."/>
            <person name="Ketchum K.A."/>
            <person name="Lee J.J."/>
            <person name="Ronning C.M."/>
            <person name="Koo H.L."/>
            <person name="Moffat K.S."/>
            <person name="Cronin L.A."/>
            <person name="Shen M."/>
            <person name="Pai G."/>
            <person name="Van Aken S."/>
            <person name="Umayam L."/>
            <person name="Tallon L.J."/>
            <person name="Gill J.E."/>
            <person name="Adams M.D."/>
            <person name="Carrera A.J."/>
            <person name="Creasy T.H."/>
            <person name="Goodman H.M."/>
            <person name="Somerville C.R."/>
            <person name="Copenhaver G.P."/>
            <person name="Preuss D."/>
            <person name="Nierman W.C."/>
            <person name="White O."/>
            <person name="Eisen J.A."/>
            <person name="Salzberg S.L."/>
            <person name="Fraser C.M."/>
            <person name="Venter J.C."/>
        </authorList>
    </citation>
    <scope>NUCLEOTIDE SEQUENCE [LARGE SCALE GENOMIC DNA]</scope>
    <source>
        <strain>cv. Columbia</strain>
    </source>
</reference>
<reference key="2">
    <citation type="journal article" date="2017" name="Plant J.">
        <title>Araport11: a complete reannotation of the Arabidopsis thaliana reference genome.</title>
        <authorList>
            <person name="Cheng C.Y."/>
            <person name="Krishnakumar V."/>
            <person name="Chan A.P."/>
            <person name="Thibaud-Nissen F."/>
            <person name="Schobel S."/>
            <person name="Town C.D."/>
        </authorList>
    </citation>
    <scope>GENOME REANNOTATION</scope>
    <source>
        <strain>cv. Columbia</strain>
    </source>
</reference>
<reference key="3">
    <citation type="journal article" date="2005" name="Plant Physiol.">
        <title>Analysis of the cDNAs of hypothetical genes on Arabidopsis chromosome 2 reveals numerous transcript variants.</title>
        <authorList>
            <person name="Xiao Y.-L."/>
            <person name="Smith S.R."/>
            <person name="Ishmael N."/>
            <person name="Redman J.C."/>
            <person name="Kumar N."/>
            <person name="Monaghan E.L."/>
            <person name="Ayele M."/>
            <person name="Haas B.J."/>
            <person name="Wu H.C."/>
            <person name="Town C.D."/>
        </authorList>
    </citation>
    <scope>NUCLEOTIDE SEQUENCE [LARGE SCALE MRNA] OF 6-383</scope>
    <source>
        <strain>cv. Columbia</strain>
    </source>
</reference>